<protein>
    <recommendedName>
        <fullName>E3 ubiquitin-protein ligase ZNRF3</fullName>
        <ecNumber>2.3.2.27</ecNumber>
    </recommendedName>
    <alternativeName>
        <fullName>RING-type E3 ubiquitin transferase ZNRF3</fullName>
    </alternativeName>
    <alternativeName>
        <fullName>Zinc/RING finger protein 3</fullName>
    </alternativeName>
</protein>
<keyword id="KW-0002">3D-structure</keyword>
<keyword id="KW-1003">Cell membrane</keyword>
<keyword id="KW-0217">Developmental protein</keyword>
<keyword id="KW-0472">Membrane</keyword>
<keyword id="KW-0479">Metal-binding</keyword>
<keyword id="KW-1185">Reference proteome</keyword>
<keyword id="KW-0732">Signal</keyword>
<keyword id="KW-0808">Transferase</keyword>
<keyword id="KW-0812">Transmembrane</keyword>
<keyword id="KW-1133">Transmembrane helix</keyword>
<keyword id="KW-0833">Ubl conjugation pathway</keyword>
<keyword id="KW-0879">Wnt signaling pathway</keyword>
<keyword id="KW-0862">Zinc</keyword>
<keyword id="KW-0863">Zinc-finger</keyword>
<gene>
    <name type="primary">znrf3</name>
</gene>
<feature type="signal peptide" evidence="2">
    <location>
        <begin position="1"/>
        <end position="28"/>
    </location>
</feature>
<feature type="chain" id="PRO_0000418385" description="E3 ubiquitin-protein ligase ZNRF3">
    <location>
        <begin position="29"/>
        <end position="853"/>
    </location>
</feature>
<feature type="topological domain" description="Extracellular" evidence="2">
    <location>
        <begin position="29"/>
        <end position="192"/>
    </location>
</feature>
<feature type="transmembrane region" description="Helical" evidence="2">
    <location>
        <begin position="193"/>
        <end position="213"/>
    </location>
</feature>
<feature type="topological domain" description="Cytoplasmic" evidence="2">
    <location>
        <begin position="214"/>
        <end position="853"/>
    </location>
</feature>
<feature type="zinc finger region" description="RING-type; atypical" evidence="3">
    <location>
        <begin position="266"/>
        <end position="307"/>
    </location>
</feature>
<feature type="region of interest" description="Disordered" evidence="4">
    <location>
        <begin position="583"/>
        <end position="629"/>
    </location>
</feature>
<feature type="region of interest" description="Disordered" evidence="4">
    <location>
        <begin position="650"/>
        <end position="673"/>
    </location>
</feature>
<feature type="region of interest" description="Disordered" evidence="4">
    <location>
        <begin position="685"/>
        <end position="713"/>
    </location>
</feature>
<feature type="region of interest" description="Disordered" evidence="4">
    <location>
        <begin position="834"/>
        <end position="853"/>
    </location>
</feature>
<feature type="compositionally biased region" description="Gly residues" evidence="4">
    <location>
        <begin position="589"/>
        <end position="607"/>
    </location>
</feature>
<feature type="compositionally biased region" description="Polar residues" evidence="4">
    <location>
        <begin position="615"/>
        <end position="629"/>
    </location>
</feature>
<feature type="strand" evidence="9">
    <location>
        <begin position="31"/>
        <end position="41"/>
    </location>
</feature>
<feature type="strand" evidence="10">
    <location>
        <begin position="43"/>
        <end position="45"/>
    </location>
</feature>
<feature type="strand" evidence="9">
    <location>
        <begin position="47"/>
        <end position="58"/>
    </location>
</feature>
<feature type="strand" evidence="8">
    <location>
        <begin position="60"/>
        <end position="62"/>
    </location>
</feature>
<feature type="strand" evidence="9">
    <location>
        <begin position="67"/>
        <end position="73"/>
    </location>
</feature>
<feature type="helix" evidence="9">
    <location>
        <begin position="76"/>
        <end position="78"/>
    </location>
</feature>
<feature type="strand" evidence="9">
    <location>
        <begin position="81"/>
        <end position="83"/>
    </location>
</feature>
<feature type="strand" evidence="9">
    <location>
        <begin position="91"/>
        <end position="98"/>
    </location>
</feature>
<feature type="helix" evidence="9">
    <location>
        <begin position="102"/>
        <end position="104"/>
    </location>
</feature>
<feature type="strand" evidence="9">
    <location>
        <begin position="105"/>
        <end position="107"/>
    </location>
</feature>
<feature type="helix" evidence="9">
    <location>
        <begin position="112"/>
        <end position="121"/>
    </location>
</feature>
<feature type="strand" evidence="9">
    <location>
        <begin position="124"/>
        <end position="130"/>
    </location>
</feature>
<feature type="helix" evidence="9">
    <location>
        <begin position="136"/>
        <end position="142"/>
    </location>
</feature>
<feature type="strand" evidence="7">
    <location>
        <begin position="149"/>
        <end position="151"/>
    </location>
</feature>
<feature type="strand" evidence="9">
    <location>
        <begin position="153"/>
        <end position="156"/>
    </location>
</feature>
<feature type="helix" evidence="9">
    <location>
        <begin position="158"/>
        <end position="170"/>
    </location>
</feature>
<feature type="strand" evidence="9">
    <location>
        <begin position="175"/>
        <end position="179"/>
    </location>
</feature>
<dbReference type="EC" id="2.3.2.27"/>
<dbReference type="EMBL" id="AAMC01003629">
    <property type="status" value="NOT_ANNOTATED_CDS"/>
    <property type="molecule type" value="Genomic_DNA"/>
</dbReference>
<dbReference type="EMBL" id="AAMC01003630">
    <property type="status" value="NOT_ANNOTATED_CDS"/>
    <property type="molecule type" value="Genomic_DNA"/>
</dbReference>
<dbReference type="EMBL" id="AAMC01003631">
    <property type="status" value="NOT_ANNOTATED_CDS"/>
    <property type="molecule type" value="Genomic_DNA"/>
</dbReference>
<dbReference type="EMBL" id="AAMC01003632">
    <property type="status" value="NOT_ANNOTATED_CDS"/>
    <property type="molecule type" value="Genomic_DNA"/>
</dbReference>
<dbReference type="EMBL" id="AAMC01003633">
    <property type="status" value="NOT_ANNOTATED_CDS"/>
    <property type="molecule type" value="Genomic_DNA"/>
</dbReference>
<dbReference type="EMBL" id="AAMC01003634">
    <property type="status" value="NOT_ANNOTATED_CDS"/>
    <property type="molecule type" value="Genomic_DNA"/>
</dbReference>
<dbReference type="EMBL" id="AAMC01003635">
    <property type="status" value="NOT_ANNOTATED_CDS"/>
    <property type="molecule type" value="Genomic_DNA"/>
</dbReference>
<dbReference type="EMBL" id="BC123917">
    <property type="protein sequence ID" value="AAI23918.1"/>
    <property type="molecule type" value="mRNA"/>
</dbReference>
<dbReference type="RefSeq" id="NP_001072864.1">
    <property type="nucleotide sequence ID" value="NM_001079396.1"/>
</dbReference>
<dbReference type="PDB" id="4C8T">
    <property type="method" value="X-ray"/>
    <property type="resolution" value="2.40 A"/>
    <property type="chains" value="A/B=24-191"/>
</dbReference>
<dbReference type="PDB" id="4C8U">
    <property type="method" value="X-ray"/>
    <property type="resolution" value="3.01 A"/>
    <property type="chains" value="A/B=24-191"/>
</dbReference>
<dbReference type="PDB" id="4C9R">
    <property type="method" value="X-ray"/>
    <property type="resolution" value="2.10 A"/>
    <property type="chains" value="A/C=24-191"/>
</dbReference>
<dbReference type="PDB" id="4C9U">
    <property type="method" value="X-ray"/>
    <property type="resolution" value="3.00 A"/>
    <property type="chains" value="A/C=24-191"/>
</dbReference>
<dbReference type="PDBsum" id="4C8T"/>
<dbReference type="PDBsum" id="4C8U"/>
<dbReference type="PDBsum" id="4C9R"/>
<dbReference type="PDBsum" id="4C9U"/>
<dbReference type="SMR" id="Q08D68"/>
<dbReference type="FunCoup" id="Q08D68">
    <property type="interactions" value="904"/>
</dbReference>
<dbReference type="STRING" id="8364.ENSXETP00000016703"/>
<dbReference type="PaxDb" id="8364-ENSXETP00000043145"/>
<dbReference type="DNASU" id="780325"/>
<dbReference type="GeneID" id="780325"/>
<dbReference type="KEGG" id="xtr:780325"/>
<dbReference type="AGR" id="Xenbase:XB-GENE-5937936"/>
<dbReference type="CTD" id="84133"/>
<dbReference type="Xenbase" id="XB-GENE-5937936">
    <property type="gene designation" value="znrf3"/>
</dbReference>
<dbReference type="eggNOG" id="KOG0800">
    <property type="taxonomic scope" value="Eukaryota"/>
</dbReference>
<dbReference type="HOGENOM" id="CLU_018099_1_0_1"/>
<dbReference type="InParanoid" id="Q08D68"/>
<dbReference type="OMA" id="FQMHPLG"/>
<dbReference type="OrthoDB" id="8062037at2759"/>
<dbReference type="PhylomeDB" id="Q08D68"/>
<dbReference type="TreeFam" id="TF317074"/>
<dbReference type="Reactome" id="R-XTR-4641263">
    <property type="pathway name" value="Regulation of FZD by ubiquitination"/>
</dbReference>
<dbReference type="UniPathway" id="UPA00143"/>
<dbReference type="EvolutionaryTrace" id="Q08D68"/>
<dbReference type="Proteomes" id="UP000008143">
    <property type="component" value="Chromosome 1"/>
</dbReference>
<dbReference type="Bgee" id="ENSXETG00000019942">
    <property type="expression patterns" value="Expressed in surface structure and 20 other cell types or tissues"/>
</dbReference>
<dbReference type="ExpressionAtlas" id="Q08D68">
    <property type="expression patterns" value="baseline"/>
</dbReference>
<dbReference type="GO" id="GO:0005886">
    <property type="term" value="C:plasma membrane"/>
    <property type="evidence" value="ECO:0000250"/>
    <property type="project" value="UniProtKB"/>
</dbReference>
<dbReference type="GO" id="GO:0061630">
    <property type="term" value="F:ubiquitin protein ligase activity"/>
    <property type="evidence" value="ECO:0000250"/>
    <property type="project" value="Xenbase"/>
</dbReference>
<dbReference type="GO" id="GO:0004842">
    <property type="term" value="F:ubiquitin-protein transferase activity"/>
    <property type="evidence" value="ECO:0000250"/>
    <property type="project" value="UniProtKB"/>
</dbReference>
<dbReference type="GO" id="GO:0008270">
    <property type="term" value="F:zinc ion binding"/>
    <property type="evidence" value="ECO:0007669"/>
    <property type="project" value="UniProtKB-KW"/>
</dbReference>
<dbReference type="GO" id="GO:0009952">
    <property type="term" value="P:anterior/posterior pattern specification"/>
    <property type="evidence" value="ECO:0000315"/>
    <property type="project" value="Xenbase"/>
</dbReference>
<dbReference type="GO" id="GO:0060173">
    <property type="term" value="P:limb development"/>
    <property type="evidence" value="ECO:0000315"/>
    <property type="project" value="UniProtKB"/>
</dbReference>
<dbReference type="GO" id="GO:0090090">
    <property type="term" value="P:negative regulation of canonical Wnt signaling pathway"/>
    <property type="evidence" value="ECO:0000250"/>
    <property type="project" value="UniProtKB"/>
</dbReference>
<dbReference type="GO" id="GO:2000051">
    <property type="term" value="P:negative regulation of non-canonical Wnt signaling pathway"/>
    <property type="evidence" value="ECO:0000250"/>
    <property type="project" value="UniProtKB"/>
</dbReference>
<dbReference type="GO" id="GO:0030178">
    <property type="term" value="P:negative regulation of Wnt signaling pathway"/>
    <property type="evidence" value="ECO:0000315"/>
    <property type="project" value="Xenbase"/>
</dbReference>
<dbReference type="GO" id="GO:0016567">
    <property type="term" value="P:protein ubiquitination"/>
    <property type="evidence" value="ECO:0000250"/>
    <property type="project" value="UniProtKB"/>
</dbReference>
<dbReference type="GO" id="GO:0072089">
    <property type="term" value="P:stem cell proliferation"/>
    <property type="evidence" value="ECO:0000250"/>
    <property type="project" value="UniProtKB"/>
</dbReference>
<dbReference type="GO" id="GO:0006511">
    <property type="term" value="P:ubiquitin-dependent protein catabolic process"/>
    <property type="evidence" value="ECO:0000250"/>
    <property type="project" value="UniProtKB"/>
</dbReference>
<dbReference type="GO" id="GO:0038018">
    <property type="term" value="P:Wnt receptor catabolic process"/>
    <property type="evidence" value="ECO:0000250"/>
    <property type="project" value="UniProtKB"/>
</dbReference>
<dbReference type="GO" id="GO:0016055">
    <property type="term" value="P:Wnt signaling pathway"/>
    <property type="evidence" value="ECO:0007669"/>
    <property type="project" value="UniProtKB-KW"/>
</dbReference>
<dbReference type="CDD" id="cd16799">
    <property type="entry name" value="RING-H2_ZNRF3"/>
    <property type="match status" value="1"/>
</dbReference>
<dbReference type="FunFam" id="3.50.30.30:FF:000018">
    <property type="entry name" value="E3 ubiquitin-protein ligase ZNRF3"/>
    <property type="match status" value="1"/>
</dbReference>
<dbReference type="FunFam" id="3.30.40.10:FF:000075">
    <property type="entry name" value="Putative e3 ubiquitin-protein ligase rnf43"/>
    <property type="match status" value="1"/>
</dbReference>
<dbReference type="Gene3D" id="3.50.30.30">
    <property type="match status" value="1"/>
</dbReference>
<dbReference type="Gene3D" id="3.30.40.10">
    <property type="entry name" value="Zinc/RING finger domain, C3HC4 (zinc finger)"/>
    <property type="match status" value="1"/>
</dbReference>
<dbReference type="InterPro" id="IPR001841">
    <property type="entry name" value="Znf_RING"/>
</dbReference>
<dbReference type="InterPro" id="IPR013083">
    <property type="entry name" value="Znf_RING/FYVE/PHD"/>
</dbReference>
<dbReference type="InterPro" id="IPR040700">
    <property type="entry name" value="ZNRF-3_ecto"/>
</dbReference>
<dbReference type="InterPro" id="IPR051073">
    <property type="entry name" value="ZNRF3_Arkadia_E3_ligases"/>
</dbReference>
<dbReference type="InterPro" id="IPR045903">
    <property type="entry name" value="ZNRF3_Znf_RING"/>
</dbReference>
<dbReference type="PANTHER" id="PTHR16200">
    <property type="entry name" value="RING ZINC FINGER"/>
    <property type="match status" value="1"/>
</dbReference>
<dbReference type="Pfam" id="PF13639">
    <property type="entry name" value="zf-RING_2"/>
    <property type="match status" value="1"/>
</dbReference>
<dbReference type="Pfam" id="PF18212">
    <property type="entry name" value="ZNRF_3_ecto"/>
    <property type="match status" value="1"/>
</dbReference>
<dbReference type="SMART" id="SM00184">
    <property type="entry name" value="RING"/>
    <property type="match status" value="1"/>
</dbReference>
<dbReference type="SUPFAM" id="SSF57850">
    <property type="entry name" value="RING/U-box"/>
    <property type="match status" value="1"/>
</dbReference>
<dbReference type="PROSITE" id="PS50089">
    <property type="entry name" value="ZF_RING_2"/>
    <property type="match status" value="1"/>
</dbReference>
<proteinExistence type="evidence at protein level"/>
<reference key="1">
    <citation type="journal article" date="2010" name="Science">
        <title>The genome of the Western clawed frog Xenopus tropicalis.</title>
        <authorList>
            <person name="Hellsten U."/>
            <person name="Harland R.M."/>
            <person name="Gilchrist M.J."/>
            <person name="Hendrix D."/>
            <person name="Jurka J."/>
            <person name="Kapitonov V."/>
            <person name="Ovcharenko I."/>
            <person name="Putnam N.H."/>
            <person name="Shu S."/>
            <person name="Taher L."/>
            <person name="Blitz I.L."/>
            <person name="Blumberg B."/>
            <person name="Dichmann D.S."/>
            <person name="Dubchak I."/>
            <person name="Amaya E."/>
            <person name="Detter J.C."/>
            <person name="Fletcher R."/>
            <person name="Gerhard D.S."/>
            <person name="Goodstein D."/>
            <person name="Graves T."/>
            <person name="Grigoriev I.V."/>
            <person name="Grimwood J."/>
            <person name="Kawashima T."/>
            <person name="Lindquist E."/>
            <person name="Lucas S.M."/>
            <person name="Mead P.E."/>
            <person name="Mitros T."/>
            <person name="Ogino H."/>
            <person name="Ohta Y."/>
            <person name="Poliakov A.V."/>
            <person name="Pollet N."/>
            <person name="Robert J."/>
            <person name="Salamov A."/>
            <person name="Sater A.K."/>
            <person name="Schmutz J."/>
            <person name="Terry A."/>
            <person name="Vize P.D."/>
            <person name="Warren W.C."/>
            <person name="Wells D."/>
            <person name="Wills A."/>
            <person name="Wilson R.K."/>
            <person name="Zimmerman L.B."/>
            <person name="Zorn A.M."/>
            <person name="Grainger R."/>
            <person name="Grammer T."/>
            <person name="Khokha M.K."/>
            <person name="Richardson P.M."/>
            <person name="Rokhsar D.S."/>
        </authorList>
    </citation>
    <scope>NUCLEOTIDE SEQUENCE [LARGE SCALE GENOMIC DNA]</scope>
</reference>
<reference key="2">
    <citation type="submission" date="2006-09" db="EMBL/GenBank/DDBJ databases">
        <authorList>
            <consortium name="NIH - Xenopus Gene Collection (XGC) project"/>
        </authorList>
    </citation>
    <scope>NUCLEOTIDE SEQUENCE [LARGE SCALE MRNA]</scope>
    <source>
        <tissue>Brain</tissue>
    </source>
</reference>
<reference key="3">
    <citation type="journal article" date="2018" name="Nature">
        <title>RSPO2 inhibition of RNF43 and ZNRF3 governs limb development independently of LGR4/5/6.</title>
        <authorList>
            <person name="Szenker-Ravi E."/>
            <person name="Altunoglu U."/>
            <person name="Leushacke M."/>
            <person name="Bosso-Lefevre C."/>
            <person name="Khatoo M."/>
            <person name="Thi Tran H."/>
            <person name="Naert T."/>
            <person name="Noelanders R."/>
            <person name="Hajamohideen A."/>
            <person name="Beneteau C."/>
            <person name="de Sousa S.B."/>
            <person name="Karaman B."/>
            <person name="Latypova X."/>
            <person name="Basaran S."/>
            <person name="Yuecel E.B."/>
            <person name="Tan T.T."/>
            <person name="Vlaminck L."/>
            <person name="Nayak S.S."/>
            <person name="Shukla A."/>
            <person name="Girisha K.M."/>
            <person name="Le Caignec C."/>
            <person name="Soshnikova N."/>
            <person name="Uyguner Z.O."/>
            <person name="Vleminckx K."/>
            <person name="Barker N."/>
            <person name="Kayserili H."/>
            <person name="Reversade B."/>
        </authorList>
    </citation>
    <scope>FUNCTION</scope>
    <scope>DEVELOPMENTAL STAGE</scope>
    <scope>DISRUPTION PHENOTYPE</scope>
</reference>
<comment type="function">
    <text evidence="1 5">E3 ubiquitin-protein ligase that acts as a negative regulator of the Wnt signaling pathway by mediating the ubiquitination and subsequent degradation of Wnt receptor complex components (By similarity). Along with RSPO2 and RNF43, constitutes a master switch that governs limb specification (PubMed:29769720).</text>
</comment>
<comment type="catalytic activity">
    <reaction>
        <text>S-ubiquitinyl-[E2 ubiquitin-conjugating enzyme]-L-cysteine + [acceptor protein]-L-lysine = [E2 ubiquitin-conjugating enzyme]-L-cysteine + N(6)-ubiquitinyl-[acceptor protein]-L-lysine.</text>
        <dbReference type="EC" id="2.3.2.27"/>
    </reaction>
</comment>
<comment type="pathway">
    <text>Protein modification; protein ubiquitination.</text>
</comment>
<comment type="subcellular location">
    <subcellularLocation>
        <location evidence="1">Cell membrane</location>
        <topology evidence="2">Single-pass type I membrane protein</topology>
    </subcellularLocation>
</comment>
<comment type="disruption phenotype">
    <text evidence="5">Simultaneous knockdown of RNF43 and ZNRF3 results in ectopic limb development.</text>
</comment>
<comment type="similarity">
    <text evidence="6">Belongs to the ZNRF3 family.</text>
</comment>
<organism>
    <name type="scientific">Xenopus tropicalis</name>
    <name type="common">Western clawed frog</name>
    <name type="synonym">Silurana tropicalis</name>
    <dbReference type="NCBI Taxonomy" id="8364"/>
    <lineage>
        <taxon>Eukaryota</taxon>
        <taxon>Metazoa</taxon>
        <taxon>Chordata</taxon>
        <taxon>Craniata</taxon>
        <taxon>Vertebrata</taxon>
        <taxon>Euteleostomi</taxon>
        <taxon>Amphibia</taxon>
        <taxon>Batrachia</taxon>
        <taxon>Anura</taxon>
        <taxon>Pipoidea</taxon>
        <taxon>Pipidae</taxon>
        <taxon>Xenopodinae</taxon>
        <taxon>Xenopus</taxon>
        <taxon>Silurana</taxon>
    </lineage>
</organism>
<evidence type="ECO:0000250" key="1">
    <source>
        <dbReference type="UniProtKB" id="Q9ULT6"/>
    </source>
</evidence>
<evidence type="ECO:0000255" key="2"/>
<evidence type="ECO:0000255" key="3">
    <source>
        <dbReference type="PROSITE-ProRule" id="PRU00175"/>
    </source>
</evidence>
<evidence type="ECO:0000256" key="4">
    <source>
        <dbReference type="SAM" id="MobiDB-lite"/>
    </source>
</evidence>
<evidence type="ECO:0000269" key="5">
    <source>
    </source>
</evidence>
<evidence type="ECO:0000305" key="6"/>
<evidence type="ECO:0007829" key="7">
    <source>
        <dbReference type="PDB" id="4C8T"/>
    </source>
</evidence>
<evidence type="ECO:0007829" key="8">
    <source>
        <dbReference type="PDB" id="4C8U"/>
    </source>
</evidence>
<evidence type="ECO:0007829" key="9">
    <source>
        <dbReference type="PDB" id="4C9R"/>
    </source>
</evidence>
<evidence type="ECO:0007829" key="10">
    <source>
        <dbReference type="PDB" id="4C9U"/>
    </source>
</evidence>
<sequence>MKEPRIRGGLPLVWLWVLLAVAPGESLAKETAFVEVVLFESSPNGDYKTHTTELQGRFSRAGATISAEGEIVQMHPLGLCNNNDEEDLYEYGWVGVVKLEQPEMDPKPCLTVLGKAKRAVQRGATAVIFDVSDNPDAVEQLNQGLEDPLKRPVVYMKGMDAIKLMNIVNKQKGARARIQHRPPRQPTEYFDMGIFLAFFVVVSLVCLILLIKIKLKQRRSQNSMNRMAVQALEKMETRKFKAKGKVPREGSCGGLDTLSSSSTSDCAICLEKYIDGEELRVIPCTHRFHKRCVDPWLLQNHTCPHCRHNIIEQKKGGHGPVCVENSSNRGRQQQQQRVILPVHYPGRVQRTGPIAAYPTRTSMGPHGNPITVLTVERPLEPDLYPARTPTFLAGYRPVSLDHASSGHHCDLEHPPYPAPPAGHGFRRAKYSGRGFNNGTCYSQYETMYQHYYFQGLSYPHQQEVGGSQAPRVVENGHNHSFHSGNNMLYQPAPTLMHMAPPSSVGSCYLHSQHQHRSVCSGYLADVPCSDSSSSSSASSAQGHASSSDSMLDCTEASNQGVYGSCSTFRSSLSSDFDPYVYRSRSPARTGGGDAPGCGGEGGTGSGRGRVECRSHQTFPNSPSRDRLSSCSMEMNYSSNSSLERRGAVISSGTVPDASVSISQGGGKDRRGPEKGCTCCFQRQAGDPSSDCTNLYLGPDPHQTSGPSSSGGLYSVTSSILHRTDPGTVLGHPSRPCCLYEENHGSCYNEDYAVSIQYALAEAAAAAAAAAVAGCEAGQPIPIIPEDPGYDGGLECVGHVSWEMEGEEEEEEVLYCQEGPCCALAEETRALCRSTGKEGAGSTTGQDCHPTDRD</sequence>
<name>ZNRF3_XENTR</name>
<accession>Q08D68</accession>